<dbReference type="EMBL" id="CP000857">
    <property type="protein sequence ID" value="ACN47521.1"/>
    <property type="molecule type" value="Genomic_DNA"/>
</dbReference>
<dbReference type="RefSeq" id="WP_000051840.1">
    <property type="nucleotide sequence ID" value="NC_012125.1"/>
</dbReference>
<dbReference type="SMR" id="C0PZR1"/>
<dbReference type="GeneID" id="45138179"/>
<dbReference type="KEGG" id="sei:SPC_3436"/>
<dbReference type="HOGENOM" id="CLU_188292_0_0_6"/>
<dbReference type="Proteomes" id="UP000001599">
    <property type="component" value="Chromosome"/>
</dbReference>
<dbReference type="GO" id="GO:0005886">
    <property type="term" value="C:plasma membrane"/>
    <property type="evidence" value="ECO:0007669"/>
    <property type="project" value="UniProtKB-SubCell"/>
</dbReference>
<dbReference type="HAMAP" id="MF_01546">
    <property type="entry name" value="AaeX"/>
    <property type="match status" value="1"/>
</dbReference>
<dbReference type="InterPro" id="IPR012451">
    <property type="entry name" value="DUF1656"/>
</dbReference>
<dbReference type="NCBIfam" id="NF008615">
    <property type="entry name" value="PRK11594.1"/>
    <property type="match status" value="1"/>
</dbReference>
<dbReference type="Pfam" id="PF07869">
    <property type="entry name" value="DUF1656"/>
    <property type="match status" value="1"/>
</dbReference>
<proteinExistence type="inferred from homology"/>
<sequence>MSLFPVIVVFGLSFPPIFFELLLSLAIFWLVRRMLVPTGIYDFVWHPALFNTALYCCLFYLISRLFV</sequence>
<reference key="1">
    <citation type="journal article" date="2009" name="PLoS ONE">
        <title>Salmonella paratyphi C: genetic divergence from Salmonella choleraesuis and pathogenic convergence with Salmonella typhi.</title>
        <authorList>
            <person name="Liu W.-Q."/>
            <person name="Feng Y."/>
            <person name="Wang Y."/>
            <person name="Zou Q.-H."/>
            <person name="Chen F."/>
            <person name="Guo J.-T."/>
            <person name="Peng Y.-H."/>
            <person name="Jin Y."/>
            <person name="Li Y.-G."/>
            <person name="Hu S.-N."/>
            <person name="Johnston R.N."/>
            <person name="Liu G.-R."/>
            <person name="Liu S.-L."/>
        </authorList>
    </citation>
    <scope>NUCLEOTIDE SEQUENCE [LARGE SCALE GENOMIC DNA]</scope>
    <source>
        <strain>RKS4594</strain>
    </source>
</reference>
<keyword id="KW-1003">Cell membrane</keyword>
<keyword id="KW-0472">Membrane</keyword>
<keyword id="KW-0812">Transmembrane</keyword>
<keyword id="KW-1133">Transmembrane helix</keyword>
<comment type="subcellular location">
    <subcellularLocation>
        <location evidence="1">Cell membrane</location>
        <topology evidence="1">Multi-pass membrane protein</topology>
    </subcellularLocation>
</comment>
<comment type="similarity">
    <text evidence="1">Belongs to the AaeX family.</text>
</comment>
<accession>C0PZR1</accession>
<name>AAEX_SALPC</name>
<evidence type="ECO:0000255" key="1">
    <source>
        <dbReference type="HAMAP-Rule" id="MF_01546"/>
    </source>
</evidence>
<gene>
    <name evidence="1" type="primary">aaeX</name>
    <name type="ordered locus">SPC_3436</name>
</gene>
<organism>
    <name type="scientific">Salmonella paratyphi C (strain RKS4594)</name>
    <dbReference type="NCBI Taxonomy" id="476213"/>
    <lineage>
        <taxon>Bacteria</taxon>
        <taxon>Pseudomonadati</taxon>
        <taxon>Pseudomonadota</taxon>
        <taxon>Gammaproteobacteria</taxon>
        <taxon>Enterobacterales</taxon>
        <taxon>Enterobacteriaceae</taxon>
        <taxon>Salmonella</taxon>
    </lineage>
</organism>
<protein>
    <recommendedName>
        <fullName evidence="1">Protein AaeX</fullName>
    </recommendedName>
</protein>
<feature type="chain" id="PRO_1000185286" description="Protein AaeX">
    <location>
        <begin position="1"/>
        <end position="67"/>
    </location>
</feature>
<feature type="transmembrane region" description="Helical" evidence="1">
    <location>
        <begin position="3"/>
        <end position="23"/>
    </location>
</feature>
<feature type="transmembrane region" description="Helical" evidence="1">
    <location>
        <begin position="43"/>
        <end position="63"/>
    </location>
</feature>